<sequence length="338" mass="36783">MTKQTIAILGPGSWGTALGQVLNDNGHTVRIWGNVPEQIDEINKEHTNKRYFKDVILDENIKGYKDLSEALDGVDAVLFVVPTKVTRLVAKQVAQALKHKVVVMHASKGLEPDSHKRLSEVLEEEIPAELRSEIVVVSGPSHAEETIVRDLTLISAASKDLETASYVQNLFSNHYFRLYTNNDVIGVETAGALKNIIAVGAGALHGLGYGDNAKAAIIARGLTEITRLGVAMGANPLTYSGLSGVGDLIVTGTSVHSRNWRAGDQLGRGEKLEDVERNMGMVIEGISTTKAAYELAQELGVYMPITQAIYKVIYQGAGIEDAIKEIMTGEFRHENEWH</sequence>
<gene>
    <name evidence="1" type="primary">gpsA</name>
    <name type="ordered locus">SSU05_2040</name>
</gene>
<keyword id="KW-0963">Cytoplasm</keyword>
<keyword id="KW-0444">Lipid biosynthesis</keyword>
<keyword id="KW-0443">Lipid metabolism</keyword>
<keyword id="KW-0520">NAD</keyword>
<keyword id="KW-0521">NADP</keyword>
<keyword id="KW-0547">Nucleotide-binding</keyword>
<keyword id="KW-0560">Oxidoreductase</keyword>
<keyword id="KW-0594">Phospholipid biosynthesis</keyword>
<keyword id="KW-1208">Phospholipid metabolism</keyword>
<dbReference type="EC" id="1.1.1.94" evidence="1"/>
<dbReference type="EMBL" id="CP000407">
    <property type="protein sequence ID" value="ABP91006.1"/>
    <property type="molecule type" value="Genomic_DNA"/>
</dbReference>
<dbReference type="SMR" id="A4VY17"/>
<dbReference type="STRING" id="391295.SSU05_2040"/>
<dbReference type="KEGG" id="ssu:SSU05_2040"/>
<dbReference type="eggNOG" id="COG0240">
    <property type="taxonomic scope" value="Bacteria"/>
</dbReference>
<dbReference type="HOGENOM" id="CLU_033449_0_2_9"/>
<dbReference type="UniPathway" id="UPA00940"/>
<dbReference type="PHI-base" id="PHI:9338"/>
<dbReference type="GO" id="GO:0005829">
    <property type="term" value="C:cytosol"/>
    <property type="evidence" value="ECO:0007669"/>
    <property type="project" value="TreeGrafter"/>
</dbReference>
<dbReference type="GO" id="GO:0047952">
    <property type="term" value="F:glycerol-3-phosphate dehydrogenase [NAD(P)+] activity"/>
    <property type="evidence" value="ECO:0007669"/>
    <property type="project" value="UniProtKB-UniRule"/>
</dbReference>
<dbReference type="GO" id="GO:0051287">
    <property type="term" value="F:NAD binding"/>
    <property type="evidence" value="ECO:0007669"/>
    <property type="project" value="InterPro"/>
</dbReference>
<dbReference type="GO" id="GO:0005975">
    <property type="term" value="P:carbohydrate metabolic process"/>
    <property type="evidence" value="ECO:0007669"/>
    <property type="project" value="InterPro"/>
</dbReference>
<dbReference type="GO" id="GO:0046167">
    <property type="term" value="P:glycerol-3-phosphate biosynthetic process"/>
    <property type="evidence" value="ECO:0007669"/>
    <property type="project" value="UniProtKB-UniRule"/>
</dbReference>
<dbReference type="GO" id="GO:0046168">
    <property type="term" value="P:glycerol-3-phosphate catabolic process"/>
    <property type="evidence" value="ECO:0007669"/>
    <property type="project" value="InterPro"/>
</dbReference>
<dbReference type="GO" id="GO:0006650">
    <property type="term" value="P:glycerophospholipid metabolic process"/>
    <property type="evidence" value="ECO:0007669"/>
    <property type="project" value="UniProtKB-UniRule"/>
</dbReference>
<dbReference type="GO" id="GO:0008654">
    <property type="term" value="P:phospholipid biosynthetic process"/>
    <property type="evidence" value="ECO:0007669"/>
    <property type="project" value="UniProtKB-KW"/>
</dbReference>
<dbReference type="FunFam" id="1.10.1040.10:FF:000001">
    <property type="entry name" value="Glycerol-3-phosphate dehydrogenase [NAD(P)+]"/>
    <property type="match status" value="1"/>
</dbReference>
<dbReference type="FunFam" id="3.40.50.720:FF:000019">
    <property type="entry name" value="Glycerol-3-phosphate dehydrogenase [NAD(P)+]"/>
    <property type="match status" value="1"/>
</dbReference>
<dbReference type="Gene3D" id="1.10.1040.10">
    <property type="entry name" value="N-(1-d-carboxylethyl)-l-norvaline Dehydrogenase, domain 2"/>
    <property type="match status" value="1"/>
</dbReference>
<dbReference type="Gene3D" id="3.40.50.720">
    <property type="entry name" value="NAD(P)-binding Rossmann-like Domain"/>
    <property type="match status" value="1"/>
</dbReference>
<dbReference type="HAMAP" id="MF_00394">
    <property type="entry name" value="NAD_Glyc3P_dehydrog"/>
    <property type="match status" value="1"/>
</dbReference>
<dbReference type="InterPro" id="IPR008927">
    <property type="entry name" value="6-PGluconate_DH-like_C_sf"/>
</dbReference>
<dbReference type="InterPro" id="IPR013328">
    <property type="entry name" value="6PGD_dom2"/>
</dbReference>
<dbReference type="InterPro" id="IPR006168">
    <property type="entry name" value="G3P_DH_NAD-dep"/>
</dbReference>
<dbReference type="InterPro" id="IPR006109">
    <property type="entry name" value="G3P_DH_NAD-dep_C"/>
</dbReference>
<dbReference type="InterPro" id="IPR011128">
    <property type="entry name" value="G3P_DH_NAD-dep_N"/>
</dbReference>
<dbReference type="InterPro" id="IPR036291">
    <property type="entry name" value="NAD(P)-bd_dom_sf"/>
</dbReference>
<dbReference type="NCBIfam" id="NF000940">
    <property type="entry name" value="PRK00094.1-2"/>
    <property type="match status" value="1"/>
</dbReference>
<dbReference type="NCBIfam" id="NF000941">
    <property type="entry name" value="PRK00094.1-3"/>
    <property type="match status" value="1"/>
</dbReference>
<dbReference type="NCBIfam" id="NF000942">
    <property type="entry name" value="PRK00094.1-4"/>
    <property type="match status" value="1"/>
</dbReference>
<dbReference type="PANTHER" id="PTHR11728">
    <property type="entry name" value="GLYCEROL-3-PHOSPHATE DEHYDROGENASE"/>
    <property type="match status" value="1"/>
</dbReference>
<dbReference type="PANTHER" id="PTHR11728:SF1">
    <property type="entry name" value="GLYCEROL-3-PHOSPHATE DEHYDROGENASE [NAD(+)] 2, CHLOROPLASTIC"/>
    <property type="match status" value="1"/>
</dbReference>
<dbReference type="Pfam" id="PF07479">
    <property type="entry name" value="NAD_Gly3P_dh_C"/>
    <property type="match status" value="1"/>
</dbReference>
<dbReference type="Pfam" id="PF01210">
    <property type="entry name" value="NAD_Gly3P_dh_N"/>
    <property type="match status" value="1"/>
</dbReference>
<dbReference type="PIRSF" id="PIRSF000114">
    <property type="entry name" value="Glycerol-3-P_dh"/>
    <property type="match status" value="1"/>
</dbReference>
<dbReference type="PRINTS" id="PR00077">
    <property type="entry name" value="GPDHDRGNASE"/>
</dbReference>
<dbReference type="SUPFAM" id="SSF48179">
    <property type="entry name" value="6-phosphogluconate dehydrogenase C-terminal domain-like"/>
    <property type="match status" value="1"/>
</dbReference>
<dbReference type="SUPFAM" id="SSF51735">
    <property type="entry name" value="NAD(P)-binding Rossmann-fold domains"/>
    <property type="match status" value="1"/>
</dbReference>
<dbReference type="PROSITE" id="PS00957">
    <property type="entry name" value="NAD_G3PDH"/>
    <property type="match status" value="1"/>
</dbReference>
<accession>A4VY17</accession>
<evidence type="ECO:0000255" key="1">
    <source>
        <dbReference type="HAMAP-Rule" id="MF_00394"/>
    </source>
</evidence>
<feature type="chain" id="PRO_1000049563" description="Glycerol-3-phosphate dehydrogenase [NAD(P)+]">
    <location>
        <begin position="1"/>
        <end position="338"/>
    </location>
</feature>
<feature type="active site" description="Proton acceptor" evidence="1">
    <location>
        <position position="194"/>
    </location>
</feature>
<feature type="binding site" evidence="1">
    <location>
        <position position="13"/>
    </location>
    <ligand>
        <name>NADPH</name>
        <dbReference type="ChEBI" id="CHEBI:57783"/>
    </ligand>
</feature>
<feature type="binding site" evidence="1">
    <location>
        <position position="14"/>
    </location>
    <ligand>
        <name>NADPH</name>
        <dbReference type="ChEBI" id="CHEBI:57783"/>
    </ligand>
</feature>
<feature type="binding site" evidence="1">
    <location>
        <position position="108"/>
    </location>
    <ligand>
        <name>NADPH</name>
        <dbReference type="ChEBI" id="CHEBI:57783"/>
    </ligand>
</feature>
<feature type="binding site" evidence="1">
    <location>
        <position position="108"/>
    </location>
    <ligand>
        <name>sn-glycerol 3-phosphate</name>
        <dbReference type="ChEBI" id="CHEBI:57597"/>
    </ligand>
</feature>
<feature type="binding site" evidence="1">
    <location>
        <position position="139"/>
    </location>
    <ligand>
        <name>sn-glycerol 3-phosphate</name>
        <dbReference type="ChEBI" id="CHEBI:57597"/>
    </ligand>
</feature>
<feature type="binding site" evidence="1">
    <location>
        <position position="141"/>
    </location>
    <ligand>
        <name>sn-glycerol 3-phosphate</name>
        <dbReference type="ChEBI" id="CHEBI:57597"/>
    </ligand>
</feature>
<feature type="binding site" evidence="1">
    <location>
        <position position="143"/>
    </location>
    <ligand>
        <name>NADPH</name>
        <dbReference type="ChEBI" id="CHEBI:57783"/>
    </ligand>
</feature>
<feature type="binding site" evidence="1">
    <location>
        <position position="194"/>
    </location>
    <ligand>
        <name>sn-glycerol 3-phosphate</name>
        <dbReference type="ChEBI" id="CHEBI:57597"/>
    </ligand>
</feature>
<feature type="binding site" evidence="1">
    <location>
        <position position="247"/>
    </location>
    <ligand>
        <name>sn-glycerol 3-phosphate</name>
        <dbReference type="ChEBI" id="CHEBI:57597"/>
    </ligand>
</feature>
<feature type="binding site" evidence="1">
    <location>
        <position position="257"/>
    </location>
    <ligand>
        <name>sn-glycerol 3-phosphate</name>
        <dbReference type="ChEBI" id="CHEBI:57597"/>
    </ligand>
</feature>
<feature type="binding site" evidence="1">
    <location>
        <position position="258"/>
    </location>
    <ligand>
        <name>NADPH</name>
        <dbReference type="ChEBI" id="CHEBI:57783"/>
    </ligand>
</feature>
<feature type="binding site" evidence="1">
    <location>
        <position position="258"/>
    </location>
    <ligand>
        <name>sn-glycerol 3-phosphate</name>
        <dbReference type="ChEBI" id="CHEBI:57597"/>
    </ligand>
</feature>
<feature type="binding site" evidence="1">
    <location>
        <position position="259"/>
    </location>
    <ligand>
        <name>sn-glycerol 3-phosphate</name>
        <dbReference type="ChEBI" id="CHEBI:57597"/>
    </ligand>
</feature>
<feature type="binding site" evidence="1">
    <location>
        <position position="282"/>
    </location>
    <ligand>
        <name>NADPH</name>
        <dbReference type="ChEBI" id="CHEBI:57783"/>
    </ligand>
</feature>
<feature type="binding site" evidence="1">
    <location>
        <position position="284"/>
    </location>
    <ligand>
        <name>NADPH</name>
        <dbReference type="ChEBI" id="CHEBI:57783"/>
    </ligand>
</feature>
<name>GPDA_STRSY</name>
<protein>
    <recommendedName>
        <fullName evidence="1">Glycerol-3-phosphate dehydrogenase [NAD(P)+]</fullName>
        <ecNumber evidence="1">1.1.1.94</ecNumber>
    </recommendedName>
    <alternativeName>
        <fullName evidence="1">NAD(P)(+)-dependent glycerol-3-phosphate dehydrogenase</fullName>
    </alternativeName>
    <alternativeName>
        <fullName evidence="1">NAD(P)H-dependent dihydroxyacetone-phosphate reductase</fullName>
    </alternativeName>
</protein>
<proteinExistence type="inferred from homology"/>
<organism>
    <name type="scientific">Streptococcus suis (strain 05ZYH33)</name>
    <dbReference type="NCBI Taxonomy" id="391295"/>
    <lineage>
        <taxon>Bacteria</taxon>
        <taxon>Bacillati</taxon>
        <taxon>Bacillota</taxon>
        <taxon>Bacilli</taxon>
        <taxon>Lactobacillales</taxon>
        <taxon>Streptococcaceae</taxon>
        <taxon>Streptococcus</taxon>
    </lineage>
</organism>
<reference key="1">
    <citation type="journal article" date="2007" name="PLoS ONE">
        <title>A glimpse of streptococcal toxic shock syndrome from comparative genomics of S. suis 2 Chinese isolates.</title>
        <authorList>
            <person name="Chen C."/>
            <person name="Tang J."/>
            <person name="Dong W."/>
            <person name="Wang C."/>
            <person name="Feng Y."/>
            <person name="Wang J."/>
            <person name="Zheng F."/>
            <person name="Pan X."/>
            <person name="Liu D."/>
            <person name="Li M."/>
            <person name="Song Y."/>
            <person name="Zhu X."/>
            <person name="Sun H."/>
            <person name="Feng T."/>
            <person name="Guo Z."/>
            <person name="Ju A."/>
            <person name="Ge J."/>
            <person name="Dong Y."/>
            <person name="Sun W."/>
            <person name="Jiang Y."/>
            <person name="Wang J."/>
            <person name="Yan J."/>
            <person name="Yang H."/>
            <person name="Wang X."/>
            <person name="Gao G.F."/>
            <person name="Yang R."/>
            <person name="Wang J."/>
            <person name="Yu J."/>
        </authorList>
    </citation>
    <scope>NUCLEOTIDE SEQUENCE [LARGE SCALE GENOMIC DNA]</scope>
    <source>
        <strain>05ZYH33</strain>
    </source>
</reference>
<comment type="function">
    <text evidence="1">Catalyzes the reduction of the glycolytic intermediate dihydroxyacetone phosphate (DHAP) to sn-glycerol 3-phosphate (G3P), the key precursor for phospholipid synthesis.</text>
</comment>
<comment type="catalytic activity">
    <reaction evidence="1">
        <text>sn-glycerol 3-phosphate + NAD(+) = dihydroxyacetone phosphate + NADH + H(+)</text>
        <dbReference type="Rhea" id="RHEA:11092"/>
        <dbReference type="ChEBI" id="CHEBI:15378"/>
        <dbReference type="ChEBI" id="CHEBI:57540"/>
        <dbReference type="ChEBI" id="CHEBI:57597"/>
        <dbReference type="ChEBI" id="CHEBI:57642"/>
        <dbReference type="ChEBI" id="CHEBI:57945"/>
        <dbReference type="EC" id="1.1.1.94"/>
    </reaction>
    <physiologicalReaction direction="right-to-left" evidence="1">
        <dbReference type="Rhea" id="RHEA:11094"/>
    </physiologicalReaction>
</comment>
<comment type="catalytic activity">
    <reaction evidence="1">
        <text>sn-glycerol 3-phosphate + NADP(+) = dihydroxyacetone phosphate + NADPH + H(+)</text>
        <dbReference type="Rhea" id="RHEA:11096"/>
        <dbReference type="ChEBI" id="CHEBI:15378"/>
        <dbReference type="ChEBI" id="CHEBI:57597"/>
        <dbReference type="ChEBI" id="CHEBI:57642"/>
        <dbReference type="ChEBI" id="CHEBI:57783"/>
        <dbReference type="ChEBI" id="CHEBI:58349"/>
        <dbReference type="EC" id="1.1.1.94"/>
    </reaction>
    <physiologicalReaction direction="right-to-left" evidence="1">
        <dbReference type="Rhea" id="RHEA:11098"/>
    </physiologicalReaction>
</comment>
<comment type="pathway">
    <text evidence="1">Membrane lipid metabolism; glycerophospholipid metabolism.</text>
</comment>
<comment type="subcellular location">
    <subcellularLocation>
        <location evidence="1">Cytoplasm</location>
    </subcellularLocation>
</comment>
<comment type="similarity">
    <text evidence="1">Belongs to the NAD-dependent glycerol-3-phosphate dehydrogenase family.</text>
</comment>